<organism>
    <name type="scientific">Bacillus cereus (strain B4264)</name>
    <dbReference type="NCBI Taxonomy" id="405532"/>
    <lineage>
        <taxon>Bacteria</taxon>
        <taxon>Bacillati</taxon>
        <taxon>Bacillota</taxon>
        <taxon>Bacilli</taxon>
        <taxon>Bacillales</taxon>
        <taxon>Bacillaceae</taxon>
        <taxon>Bacillus</taxon>
        <taxon>Bacillus cereus group</taxon>
    </lineage>
</organism>
<protein>
    <recommendedName>
        <fullName evidence="1">2-oxoglutarate dehydrogenase E1 component</fullName>
        <ecNumber evidence="1">1.2.4.2</ecNumber>
    </recommendedName>
    <alternativeName>
        <fullName evidence="1">Alpha-ketoglutarate dehydrogenase</fullName>
    </alternativeName>
</protein>
<evidence type="ECO:0000255" key="1">
    <source>
        <dbReference type="HAMAP-Rule" id="MF_01169"/>
    </source>
</evidence>
<sequence>MTRKNTTTNPWAKFHGPNLGYVIEQYDLYVTGAGSVDPELQELFEIFGAPSFQDDVVTGDNTATHFSPQNTGNIEKILKVVQLVEQIRSFGHTLAHINPMEDAANGQSLLEKAMSELSDADLKAIPAKTVWPDAPEGIHTALDVIHRLKDVYTKSLAYEFSHIQDSEERAWLHQMVESNSLRQPLSNKKRTALLKRLTAVEGFEQFLHKTFVGQKRFSIEGVDMLVPVLDEIVLEGAKNGVEDVMIGMAHRGRLSVLAHVLEKPYSHMFAEFKHAKIEGAVANSGWTGDVKYHLGREQVVSNEEVSTRVTLANNPSHLEFVNPVVEGFARAAQENRKKSGLPDQDTSKSFVILVHGDAAFPGQGIVSETLNLSRLNAYQTGGTIHVIANNAVGFTTDSYDSRSTKYSSDLAKGFDIPIVHVNADDPEACLAAANLAIQYRMLFKKDFLIDLIGYRRYGHNEMDDPAVTQPQVYKKIKNHPTVRAIYADQLQAAGVLNADEVETITQFTQEQLKSDYAQVPPADTSDATIHVKVPDVVAKGIQSIDTGVEIDSLRAINEGLLSWPEGFNVYPKVKKILERRKDALEENGKIEWALAESLAFASILQEGTPIRLTGQDSQRGTFAHRHIVLHDTDTNETYSPLHRLPNINASFSVHNSPLSEAAVVGYEYGYNVFAPETLVMWEAQYGDFSNTAQALFDQYVSAGRAKWGQKSGLVLLLPHGYEGQGPEHSSARPERFLQLAAENNWTVANLTSAAQYFHILRRQASILGTEAVRPLVLMTPKSLLRHPLTLSTASQLSEGRFQPALEQENLGMKPNKVKRLVLSTGKMAIDLAAEIESGKHEYNLDEVHVVRIEQLYPFPAEKVQSIIKRFKNLEEIIWVQEEPRNMGAWHYMAPILFELAGDKVKTGYIGRPDRSSPSGGDPFAHKAEQELIVAHALDVKYNFRQDKQEIEVYSN</sequence>
<dbReference type="EC" id="1.2.4.2" evidence="1"/>
<dbReference type="EMBL" id="CP001176">
    <property type="protein sequence ID" value="ACK60751.1"/>
    <property type="molecule type" value="Genomic_DNA"/>
</dbReference>
<dbReference type="RefSeq" id="WP_000197158.1">
    <property type="nucleotide sequence ID" value="NC_011725.1"/>
</dbReference>
<dbReference type="SMR" id="B7HH19"/>
<dbReference type="KEGG" id="bcb:BCB4264_A1314"/>
<dbReference type="HOGENOM" id="CLU_004709_1_0_9"/>
<dbReference type="Proteomes" id="UP000007096">
    <property type="component" value="Chromosome"/>
</dbReference>
<dbReference type="GO" id="GO:0005829">
    <property type="term" value="C:cytosol"/>
    <property type="evidence" value="ECO:0007669"/>
    <property type="project" value="TreeGrafter"/>
</dbReference>
<dbReference type="GO" id="GO:0045252">
    <property type="term" value="C:oxoglutarate dehydrogenase complex"/>
    <property type="evidence" value="ECO:0007669"/>
    <property type="project" value="TreeGrafter"/>
</dbReference>
<dbReference type="GO" id="GO:0004591">
    <property type="term" value="F:oxoglutarate dehydrogenase (succinyl-transferring) activity"/>
    <property type="evidence" value="ECO:0007669"/>
    <property type="project" value="UniProtKB-UniRule"/>
</dbReference>
<dbReference type="GO" id="GO:0030976">
    <property type="term" value="F:thiamine pyrophosphate binding"/>
    <property type="evidence" value="ECO:0007669"/>
    <property type="project" value="UniProtKB-UniRule"/>
</dbReference>
<dbReference type="GO" id="GO:0006096">
    <property type="term" value="P:glycolytic process"/>
    <property type="evidence" value="ECO:0007669"/>
    <property type="project" value="UniProtKB-UniRule"/>
</dbReference>
<dbReference type="GO" id="GO:0006099">
    <property type="term" value="P:tricarboxylic acid cycle"/>
    <property type="evidence" value="ECO:0007669"/>
    <property type="project" value="TreeGrafter"/>
</dbReference>
<dbReference type="CDD" id="cd02016">
    <property type="entry name" value="TPP_E1_OGDC_like"/>
    <property type="match status" value="1"/>
</dbReference>
<dbReference type="FunFam" id="3.40.50.11610:FF:000002">
    <property type="entry name" value="2-oxoglutarate dehydrogenase E1 component"/>
    <property type="match status" value="1"/>
</dbReference>
<dbReference type="FunFam" id="3.40.50.970:FF:000036">
    <property type="entry name" value="2-oxoglutarate dehydrogenase E1 component"/>
    <property type="match status" value="1"/>
</dbReference>
<dbReference type="Gene3D" id="3.40.50.12470">
    <property type="match status" value="1"/>
</dbReference>
<dbReference type="Gene3D" id="3.40.50.970">
    <property type="match status" value="1"/>
</dbReference>
<dbReference type="Gene3D" id="3.40.50.11610">
    <property type="entry name" value="Multifunctional 2-oxoglutarate metabolism enzyme, C-terminal domain"/>
    <property type="match status" value="1"/>
</dbReference>
<dbReference type="HAMAP" id="MF_01169">
    <property type="entry name" value="SucA_OdhA"/>
    <property type="match status" value="1"/>
</dbReference>
<dbReference type="InterPro" id="IPR011603">
    <property type="entry name" value="2oxoglutarate_DH_E1"/>
</dbReference>
<dbReference type="InterPro" id="IPR023784">
    <property type="entry name" value="2oxoglutarate_DH_E1_bac"/>
</dbReference>
<dbReference type="InterPro" id="IPR001017">
    <property type="entry name" value="DH_E1"/>
</dbReference>
<dbReference type="InterPro" id="IPR042179">
    <property type="entry name" value="KGD_C_sf"/>
</dbReference>
<dbReference type="InterPro" id="IPR031717">
    <property type="entry name" value="ODO-1/KGD_C"/>
</dbReference>
<dbReference type="InterPro" id="IPR029061">
    <property type="entry name" value="THDP-binding"/>
</dbReference>
<dbReference type="InterPro" id="IPR005475">
    <property type="entry name" value="Transketolase-like_Pyr-bd"/>
</dbReference>
<dbReference type="NCBIfam" id="TIGR00239">
    <property type="entry name" value="2oxo_dh_E1"/>
    <property type="match status" value="1"/>
</dbReference>
<dbReference type="NCBIfam" id="NF006914">
    <property type="entry name" value="PRK09404.1"/>
    <property type="match status" value="1"/>
</dbReference>
<dbReference type="NCBIfam" id="NF008907">
    <property type="entry name" value="PRK12270.1"/>
    <property type="match status" value="1"/>
</dbReference>
<dbReference type="PANTHER" id="PTHR23152:SF4">
    <property type="entry name" value="2-OXOADIPATE DEHYDROGENASE COMPLEX COMPONENT E1"/>
    <property type="match status" value="1"/>
</dbReference>
<dbReference type="PANTHER" id="PTHR23152">
    <property type="entry name" value="2-OXOGLUTARATE DEHYDROGENASE"/>
    <property type="match status" value="1"/>
</dbReference>
<dbReference type="Pfam" id="PF00676">
    <property type="entry name" value="E1_dh"/>
    <property type="match status" value="1"/>
</dbReference>
<dbReference type="Pfam" id="PF16870">
    <property type="entry name" value="OxoGdeHyase_C"/>
    <property type="match status" value="1"/>
</dbReference>
<dbReference type="Pfam" id="PF02779">
    <property type="entry name" value="Transket_pyr"/>
    <property type="match status" value="1"/>
</dbReference>
<dbReference type="PIRSF" id="PIRSF000157">
    <property type="entry name" value="Oxoglu_dh_E1"/>
    <property type="match status" value="1"/>
</dbReference>
<dbReference type="SMART" id="SM00861">
    <property type="entry name" value="Transket_pyr"/>
    <property type="match status" value="1"/>
</dbReference>
<dbReference type="SUPFAM" id="SSF52518">
    <property type="entry name" value="Thiamin diphosphate-binding fold (THDP-binding)"/>
    <property type="match status" value="2"/>
</dbReference>
<comment type="function">
    <text evidence="1">E1 component of the 2-oxoglutarate dehydrogenase (OGDH) complex which catalyzes the decarboxylation of 2-oxoglutarate, the first step in the conversion of 2-oxoglutarate to succinyl-CoA and CO(2).</text>
</comment>
<comment type="catalytic activity">
    <reaction evidence="1">
        <text>N(6)-[(R)-lipoyl]-L-lysyl-[protein] + 2-oxoglutarate + H(+) = N(6)-[(R)-S(8)-succinyldihydrolipoyl]-L-lysyl-[protein] + CO2</text>
        <dbReference type="Rhea" id="RHEA:12188"/>
        <dbReference type="Rhea" id="RHEA-COMP:10474"/>
        <dbReference type="Rhea" id="RHEA-COMP:20092"/>
        <dbReference type="ChEBI" id="CHEBI:15378"/>
        <dbReference type="ChEBI" id="CHEBI:16526"/>
        <dbReference type="ChEBI" id="CHEBI:16810"/>
        <dbReference type="ChEBI" id="CHEBI:83099"/>
        <dbReference type="ChEBI" id="CHEBI:83120"/>
        <dbReference type="EC" id="1.2.4.2"/>
    </reaction>
</comment>
<comment type="cofactor">
    <cofactor evidence="1">
        <name>thiamine diphosphate</name>
        <dbReference type="ChEBI" id="CHEBI:58937"/>
    </cofactor>
</comment>
<comment type="subunit">
    <text evidence="1">Homodimer. Part of the 2-oxoglutarate dehydrogenase (OGDH) complex composed of E1 (2-oxoglutarate dehydrogenase), E2 (dihydrolipoamide succinyltransferase) and E3 (dihydrolipoamide dehydrogenase); the complex contains multiple copies of the three enzymatic components (E1, E2 and E3).</text>
</comment>
<comment type="similarity">
    <text evidence="1">Belongs to the alpha-ketoglutarate dehydrogenase family.</text>
</comment>
<feature type="chain" id="PRO_1000137968" description="2-oxoglutarate dehydrogenase E1 component">
    <location>
        <begin position="1"/>
        <end position="955"/>
    </location>
</feature>
<gene>
    <name evidence="1" type="primary">odhA</name>
    <name type="ordered locus">BCB4264_A1314</name>
</gene>
<name>ODO1_BACC4</name>
<keyword id="KW-0324">Glycolysis</keyword>
<keyword id="KW-0560">Oxidoreductase</keyword>
<keyword id="KW-0786">Thiamine pyrophosphate</keyword>
<proteinExistence type="inferred from homology"/>
<reference key="1">
    <citation type="submission" date="2008-10" db="EMBL/GenBank/DDBJ databases">
        <title>Genome sequence of Bacillus cereus B4264.</title>
        <authorList>
            <person name="Dodson R.J."/>
            <person name="Durkin A.S."/>
            <person name="Rosovitz M.J."/>
            <person name="Rasko D.A."/>
            <person name="Hoffmaster A."/>
            <person name="Ravel J."/>
            <person name="Sutton G."/>
        </authorList>
    </citation>
    <scope>NUCLEOTIDE SEQUENCE [LARGE SCALE GENOMIC DNA]</scope>
    <source>
        <strain>B4264</strain>
    </source>
</reference>
<accession>B7HH19</accession>